<reference key="1">
    <citation type="journal article" date="1997" name="Nature">
        <title>The nucleotide sequence of Saccharomyces cerevisiae chromosome V.</title>
        <authorList>
            <person name="Dietrich F.S."/>
            <person name="Mulligan J.T."/>
            <person name="Hennessy K.M."/>
            <person name="Yelton M.A."/>
            <person name="Allen E."/>
            <person name="Araujo R."/>
            <person name="Aviles E."/>
            <person name="Berno A."/>
            <person name="Brennan T."/>
            <person name="Carpenter J."/>
            <person name="Chen E."/>
            <person name="Cherry J.M."/>
            <person name="Chung E."/>
            <person name="Duncan M."/>
            <person name="Guzman E."/>
            <person name="Hartzell G."/>
            <person name="Hunicke-Smith S."/>
            <person name="Hyman R.W."/>
            <person name="Kayser A."/>
            <person name="Komp C."/>
            <person name="Lashkari D."/>
            <person name="Lew H."/>
            <person name="Lin D."/>
            <person name="Mosedale D."/>
            <person name="Nakahara K."/>
            <person name="Namath A."/>
            <person name="Norgren R."/>
            <person name="Oefner P."/>
            <person name="Oh C."/>
            <person name="Petel F.X."/>
            <person name="Roberts D."/>
            <person name="Sehl P."/>
            <person name="Schramm S."/>
            <person name="Shogren T."/>
            <person name="Smith V."/>
            <person name="Taylor P."/>
            <person name="Wei Y."/>
            <person name="Botstein D."/>
            <person name="Davis R.W."/>
        </authorList>
    </citation>
    <scope>NUCLEOTIDE SEQUENCE [LARGE SCALE GENOMIC DNA]</scope>
    <source>
        <strain>ATCC 204508 / S288c</strain>
    </source>
</reference>
<reference key="2">
    <citation type="journal article" date="2014" name="G3 (Bethesda)">
        <title>The reference genome sequence of Saccharomyces cerevisiae: Then and now.</title>
        <authorList>
            <person name="Engel S.R."/>
            <person name="Dietrich F.S."/>
            <person name="Fisk D.G."/>
            <person name="Binkley G."/>
            <person name="Balakrishnan R."/>
            <person name="Costanzo M.C."/>
            <person name="Dwight S.S."/>
            <person name="Hitz B.C."/>
            <person name="Karra K."/>
            <person name="Nash R.S."/>
            <person name="Weng S."/>
            <person name="Wong E.D."/>
            <person name="Lloyd P."/>
            <person name="Skrzypek M.S."/>
            <person name="Miyasato S.R."/>
            <person name="Simison M."/>
            <person name="Cherry J.M."/>
        </authorList>
    </citation>
    <scope>GENOME REANNOTATION</scope>
    <source>
        <strain>ATCC 204508 / S288c</strain>
    </source>
</reference>
<reference key="3">
    <citation type="journal article" date="2007" name="Genome Res.">
        <title>Approaching a complete repository of sequence-verified protein-encoding clones for Saccharomyces cerevisiae.</title>
        <authorList>
            <person name="Hu Y."/>
            <person name="Rolfs A."/>
            <person name="Bhullar B."/>
            <person name="Murthy T.V.S."/>
            <person name="Zhu C."/>
            <person name="Berger M.F."/>
            <person name="Camargo A.A."/>
            <person name="Kelley F."/>
            <person name="McCarron S."/>
            <person name="Jepson D."/>
            <person name="Richardson A."/>
            <person name="Raphael J."/>
            <person name="Moreira D."/>
            <person name="Taycher E."/>
            <person name="Zuo D."/>
            <person name="Mohr S."/>
            <person name="Kane M.F."/>
            <person name="Williamson J."/>
            <person name="Simpson A.J.G."/>
            <person name="Bulyk M.L."/>
            <person name="Harlow E."/>
            <person name="Marsischky G."/>
            <person name="Kolodner R.D."/>
            <person name="LaBaer J."/>
        </authorList>
    </citation>
    <scope>NUCLEOTIDE SEQUENCE [GENOMIC DNA]</scope>
    <source>
        <strain>ATCC 204508 / S288c</strain>
    </source>
</reference>
<reference key="4">
    <citation type="journal article" date="2001" name="Mol. Cell">
        <title>Composition and functional characterization of yeast 66S ribosome assembly intermediates.</title>
        <authorList>
            <person name="Harnpicharnchai P."/>
            <person name="Jakovljevic J."/>
            <person name="Horsey E."/>
            <person name="Miles T."/>
            <person name="Roman J."/>
            <person name="Rout M."/>
            <person name="Meagher D."/>
            <person name="Imai B."/>
            <person name="Guo Y."/>
            <person name="Brame C.J."/>
            <person name="Shabanowitz J."/>
            <person name="Hunt D.F."/>
            <person name="Woolford J.L. Jr."/>
        </authorList>
    </citation>
    <scope>IDENTIFICATION IN THE PRE-66S RIBOSOMAL PARTICLE</scope>
    <scope>INTERACTION WITH NOP7</scope>
    <scope>IDENTIFICATION BY MASS SPECTROMETRY</scope>
</reference>
<reference key="5">
    <citation type="journal article" date="2003" name="Nature">
        <title>Global analysis of protein expression in yeast.</title>
        <authorList>
            <person name="Ghaemmaghami S."/>
            <person name="Huh W.-K."/>
            <person name="Bower K."/>
            <person name="Howson R.W."/>
            <person name="Belle A."/>
            <person name="Dephoure N."/>
            <person name="O'Shea E.K."/>
            <person name="Weissman J.S."/>
        </authorList>
    </citation>
    <scope>LEVEL OF PROTEIN EXPRESSION [LARGE SCALE ANALYSIS]</scope>
</reference>
<reference key="6">
    <citation type="journal article" date="2004" name="RNA">
        <title>Role of the yeast Rrp1 protein in the dynamics of pre-ribosome maturation.</title>
        <authorList>
            <person name="Horsey E.W."/>
            <person name="Jakovljevic J."/>
            <person name="Miles T.D."/>
            <person name="Harnpicharnchai P."/>
            <person name="Woolford J.L. Jr."/>
        </authorList>
    </citation>
    <scope>IDENTIFICATION IN THE PRE-66S RIBOSOMAL PARTICLE</scope>
    <scope>INTERACTION WITH RRP1</scope>
    <scope>IDENTIFICATION BY MASS SPECTROMETRY</scope>
</reference>
<reference key="7">
    <citation type="journal article" date="2006" name="J. Biol. Chem.">
        <title>Nsa2 is an unstable, conserved factor required for the maturation of 27 SB pre-rRNAs.</title>
        <authorList>
            <person name="Lebreton A."/>
            <person name="Saveanu C."/>
            <person name="Decourty L."/>
            <person name="Jacquier A."/>
            <person name="Fromont-Racine M."/>
        </authorList>
    </citation>
    <scope>FUNCTION</scope>
    <scope>INTERACTION WITH NOG1</scope>
</reference>
<reference key="8">
    <citation type="journal article" date="2006" name="Yeast">
        <title>The budding yeast rRNA and ribosome biosynthesis (RRB) regulon contains over 200 genes.</title>
        <authorList>
            <person name="Wade C.H."/>
            <person name="Umbarger M.A."/>
            <person name="McAlear M.A."/>
        </authorList>
    </citation>
    <scope>FUNCTION</scope>
</reference>
<reference key="9">
    <citation type="journal article" date="2007" name="Mol. Genet. Genomics">
        <title>In vivo functional characterization of the Saccharomyces cerevisiae 60S biogenesis GTPase Nog1.</title>
        <authorList>
            <person name="Fuentes J.L."/>
            <person name="Datta K."/>
            <person name="Sullivan S.M."/>
            <person name="Walker A."/>
            <person name="Maddock J.R."/>
        </authorList>
    </citation>
    <scope>INTERACTION WITH NOP7</scope>
    <scope>IDENTIFICATION BY MASS SPECTROMETRY</scope>
</reference>
<reference key="10">
    <citation type="journal article" date="2012" name="Proc. Natl. Acad. Sci. U.S.A.">
        <title>N-terminal acetylome analyses and functional insights of the N-terminal acetyltransferase NatB.</title>
        <authorList>
            <person name="Van Damme P."/>
            <person name="Lasa M."/>
            <person name="Polevoda B."/>
            <person name="Gazquez C."/>
            <person name="Elosegui-Artola A."/>
            <person name="Kim D.S."/>
            <person name="De Juan-Pardo E."/>
            <person name="Demeyer K."/>
            <person name="Hole K."/>
            <person name="Larrea E."/>
            <person name="Timmerman E."/>
            <person name="Prieto J."/>
            <person name="Arnesen T."/>
            <person name="Sherman F."/>
            <person name="Gevaert K."/>
            <person name="Aldabe R."/>
        </authorList>
    </citation>
    <scope>IDENTIFICATION BY MASS SPECTROMETRY [LARGE SCALE ANALYSIS]</scope>
</reference>
<reference key="11">
    <citation type="journal article" date="2016" name="Nature">
        <title>Diverse roles of assembly factors revealed by structures of late nuclear pre-60S ribosomes.</title>
        <authorList>
            <person name="Wu S."/>
            <person name="Tutuncuoglu B."/>
            <person name="Yan K."/>
            <person name="Brown H."/>
            <person name="Zhang Y."/>
            <person name="Tan D."/>
            <person name="Gamalinda M."/>
            <person name="Yuan Y."/>
            <person name="Li Z."/>
            <person name="Jakovljevic J."/>
            <person name="Ma C."/>
            <person name="Lei J."/>
            <person name="Dong M.Q."/>
            <person name="Woolford J.L. Jr."/>
            <person name="Gao N."/>
        </authorList>
    </citation>
    <scope>STRUCTURE BY ELECTRON MICROSCOPY (3.08 ANGSTROMS)</scope>
</reference>
<reference key="12">
    <citation type="journal article" date="2014" name="J. Cell Biol.">
        <title>A network of assembly factors is involved in remodeling rRNA elements during preribosome maturation.</title>
        <authorList>
            <person name="Bassler J."/>
            <person name="Paternoga H."/>
            <person name="Holdermann I."/>
            <person name="Thoms M."/>
            <person name="Granneman S."/>
            <person name="Barrio-Garcia C."/>
            <person name="Nyarko A."/>
            <person name="Lee W."/>
            <person name="Stier G."/>
            <person name="Clark S.A."/>
            <person name="Schraivogel D."/>
            <person name="Kallas M."/>
            <person name="Beckmann R."/>
            <person name="Tollervey D."/>
            <person name="Barbar E."/>
            <person name="Sinning I."/>
            <person name="Hurt E."/>
        </authorList>
    </citation>
    <scope>X-RAY CRYSTALLOGRAPHY (3.20 ANGSTROMS) OF 81-101</scope>
    <scope>INTERACTION WITH RSA4</scope>
    <scope>MUTAGENESIS OF TYR-90</scope>
</reference>
<reference key="13">
    <citation type="journal article" date="2015" name="J. Cell Biol.">
        <authorList>
            <person name="Bassler J."/>
            <person name="Paternoga H."/>
            <person name="Holdermann I."/>
            <person name="Thoms M."/>
            <person name="Granneman S."/>
            <person name="Barrio-Garcia C."/>
            <person name="Nyarko A."/>
            <person name="Lee W."/>
            <person name="Stier G."/>
            <person name="Clark S.A."/>
            <person name="Schraivogel D."/>
            <person name="Kallas M."/>
            <person name="Beckmann R."/>
            <person name="Tollervey D."/>
            <person name="Barbar E."/>
            <person name="Sinning I."/>
            <person name="Hurt E."/>
        </authorList>
    </citation>
    <scope>ERRATUM OF PUBMED:25404745</scope>
</reference>
<accession>P40078</accession>
<accession>D3DM32</accession>
<sequence length="261" mass="29723">MPQNDYIERHIKQHGKRLDHEERKRKREARESHKISERAQKLTGWKGKQFAKKRYAEKVSMRKKIKAHEQSKVKGSSKPLDTDGDALPTYLLDREQNNTAKAISSSIKQKRLEKADKFSVPLPKVRGISEEEMFKVIKTGKSRSKSWKRMITKHTFVGEGFTRRPVKMERIIRPSALRQKKANVTHPELGVTVFLPILAVKKNPQSPMYTQLGVLTKGTIIEVNVSELGMVTAGGKVVWGKYAQVTNEPDRDGCVNAVLLV</sequence>
<proteinExistence type="evidence at protein level"/>
<protein>
    <recommendedName>
        <fullName>Ribosome biogenesis protein NSA2</fullName>
    </recommendedName>
    <alternativeName>
        <fullName>NOP7-associated protein 2</fullName>
    </alternativeName>
</protein>
<dbReference type="EMBL" id="U18916">
    <property type="protein sequence ID" value="AAC03224.1"/>
    <property type="molecule type" value="Genomic_DNA"/>
</dbReference>
<dbReference type="EMBL" id="AY693192">
    <property type="protein sequence ID" value="AAT93211.1"/>
    <property type="molecule type" value="Genomic_DNA"/>
</dbReference>
<dbReference type="EMBL" id="BK006939">
    <property type="protein sequence ID" value="DAA07786.1"/>
    <property type="molecule type" value="Genomic_DNA"/>
</dbReference>
<dbReference type="PIR" id="S43218">
    <property type="entry name" value="S43218"/>
</dbReference>
<dbReference type="RefSeq" id="NP_011052.1">
    <property type="nucleotide sequence ID" value="NM_001179016.1"/>
</dbReference>
<dbReference type="PDB" id="3JCT">
    <property type="method" value="EM"/>
    <property type="resolution" value="3.08 A"/>
    <property type="chains" value="r=1-261"/>
</dbReference>
<dbReference type="PDB" id="4WJV">
    <property type="method" value="X-ray"/>
    <property type="resolution" value="3.20 A"/>
    <property type="chains" value="I/J/K/L=81-101"/>
</dbReference>
<dbReference type="PDB" id="6ELZ">
    <property type="method" value="EM"/>
    <property type="resolution" value="3.30 A"/>
    <property type="chains" value="r=1-261"/>
</dbReference>
<dbReference type="PDB" id="6EM1">
    <property type="method" value="EM"/>
    <property type="resolution" value="3.60 A"/>
    <property type="chains" value="r=1-261"/>
</dbReference>
<dbReference type="PDB" id="6EM5">
    <property type="method" value="EM"/>
    <property type="resolution" value="4.30 A"/>
    <property type="chains" value="r=1-261"/>
</dbReference>
<dbReference type="PDB" id="6FT6">
    <property type="method" value="EM"/>
    <property type="resolution" value="3.90 A"/>
    <property type="chains" value="r=1-261"/>
</dbReference>
<dbReference type="PDB" id="6M62">
    <property type="method" value="EM"/>
    <property type="resolution" value="3.20 A"/>
    <property type="chains" value="r=1-261"/>
</dbReference>
<dbReference type="PDB" id="6N8J">
    <property type="method" value="EM"/>
    <property type="resolution" value="3.50 A"/>
    <property type="chains" value="r=1-261"/>
</dbReference>
<dbReference type="PDB" id="6YLG">
    <property type="method" value="EM"/>
    <property type="resolution" value="3.00 A"/>
    <property type="chains" value="r=1-261"/>
</dbReference>
<dbReference type="PDB" id="6YLH">
    <property type="method" value="EM"/>
    <property type="resolution" value="3.10 A"/>
    <property type="chains" value="r=1-261"/>
</dbReference>
<dbReference type="PDB" id="6YLX">
    <property type="method" value="EM"/>
    <property type="resolution" value="3.90 A"/>
    <property type="chains" value="r=1-261"/>
</dbReference>
<dbReference type="PDB" id="6YLY">
    <property type="method" value="EM"/>
    <property type="resolution" value="3.80 A"/>
    <property type="chains" value="r=1-261"/>
</dbReference>
<dbReference type="PDB" id="7BT6">
    <property type="method" value="EM"/>
    <property type="resolution" value="3.12 A"/>
    <property type="chains" value="r=1-261"/>
</dbReference>
<dbReference type="PDB" id="7BTB">
    <property type="method" value="EM"/>
    <property type="resolution" value="3.22 A"/>
    <property type="chains" value="r=1-261"/>
</dbReference>
<dbReference type="PDB" id="7NAC">
    <property type="method" value="EM"/>
    <property type="resolution" value="3.04 A"/>
    <property type="chains" value="r=1-261"/>
</dbReference>
<dbReference type="PDB" id="7OF1">
    <property type="method" value="EM"/>
    <property type="resolution" value="3.10 A"/>
    <property type="chains" value="r=1-261"/>
</dbReference>
<dbReference type="PDB" id="7OH3">
    <property type="method" value="EM"/>
    <property type="resolution" value="3.40 A"/>
    <property type="chains" value="r=1-261"/>
</dbReference>
<dbReference type="PDB" id="7OHP">
    <property type="method" value="EM"/>
    <property type="resolution" value="3.90 A"/>
    <property type="chains" value="r=1-261"/>
</dbReference>
<dbReference type="PDB" id="7OHQ">
    <property type="method" value="EM"/>
    <property type="resolution" value="3.10 A"/>
    <property type="chains" value="r=1-261"/>
</dbReference>
<dbReference type="PDB" id="7OHR">
    <property type="method" value="EM"/>
    <property type="resolution" value="4.72 A"/>
    <property type="chains" value="r=1-261"/>
</dbReference>
<dbReference type="PDB" id="7OHS">
    <property type="method" value="EM"/>
    <property type="resolution" value="4.38 A"/>
    <property type="chains" value="r=1-261"/>
</dbReference>
<dbReference type="PDB" id="7OHT">
    <property type="method" value="EM"/>
    <property type="resolution" value="4.70 A"/>
    <property type="chains" value="r=1-261"/>
</dbReference>
<dbReference type="PDB" id="7OHU">
    <property type="method" value="EM"/>
    <property type="resolution" value="3.70 A"/>
    <property type="chains" value="r=1-261"/>
</dbReference>
<dbReference type="PDB" id="7OHV">
    <property type="method" value="EM"/>
    <property type="resolution" value="3.90 A"/>
    <property type="chains" value="r=1-261"/>
</dbReference>
<dbReference type="PDB" id="7OHW">
    <property type="method" value="EM"/>
    <property type="resolution" value="3.50 A"/>
    <property type="chains" value="r=1-261"/>
</dbReference>
<dbReference type="PDB" id="7OHY">
    <property type="method" value="EM"/>
    <property type="resolution" value="3.90 A"/>
    <property type="chains" value="r=1-261"/>
</dbReference>
<dbReference type="PDB" id="7R6K">
    <property type="method" value="EM"/>
    <property type="resolution" value="3.17 A"/>
    <property type="chains" value="r=1-261"/>
</dbReference>
<dbReference type="PDB" id="7R7A">
    <property type="method" value="EM"/>
    <property type="resolution" value="3.04 A"/>
    <property type="chains" value="r=1-261"/>
</dbReference>
<dbReference type="PDB" id="7R7C">
    <property type="method" value="EM"/>
    <property type="resolution" value="3.71 A"/>
    <property type="chains" value="r=149-260"/>
</dbReference>
<dbReference type="PDB" id="7U0H">
    <property type="method" value="EM"/>
    <property type="resolution" value="2.76 A"/>
    <property type="chains" value="r=1-261"/>
</dbReference>
<dbReference type="PDB" id="7UG6">
    <property type="method" value="EM"/>
    <property type="resolution" value="2.90 A"/>
    <property type="chains" value="r=1-261"/>
</dbReference>
<dbReference type="PDB" id="7UOO">
    <property type="method" value="EM"/>
    <property type="resolution" value="2.34 A"/>
    <property type="chains" value="r=1-261"/>
</dbReference>
<dbReference type="PDB" id="7UQB">
    <property type="method" value="EM"/>
    <property type="resolution" value="2.43 A"/>
    <property type="chains" value="r=1-261"/>
</dbReference>
<dbReference type="PDB" id="7UQZ">
    <property type="method" value="EM"/>
    <property type="resolution" value="2.44 A"/>
    <property type="chains" value="r=1-261"/>
</dbReference>
<dbReference type="PDB" id="7V08">
    <property type="method" value="EM"/>
    <property type="resolution" value="2.36 A"/>
    <property type="chains" value="r=1-261"/>
</dbReference>
<dbReference type="PDB" id="7Z34">
    <property type="method" value="EM"/>
    <property type="resolution" value="3.80 A"/>
    <property type="chains" value="r=1-261"/>
</dbReference>
<dbReference type="PDB" id="8HFR">
    <property type="method" value="EM"/>
    <property type="resolution" value="2.64 A"/>
    <property type="chains" value="xd=1-261"/>
</dbReference>
<dbReference type="PDB" id="8V83">
    <property type="method" value="EM"/>
    <property type="resolution" value="2.53 A"/>
    <property type="chains" value="r=1-261"/>
</dbReference>
<dbReference type="PDB" id="8V84">
    <property type="method" value="EM"/>
    <property type="resolution" value="2.70 A"/>
    <property type="chains" value="r=1-261"/>
</dbReference>
<dbReference type="PDB" id="8V87">
    <property type="method" value="EM"/>
    <property type="resolution" value="2.66 A"/>
    <property type="chains" value="r=1-261"/>
</dbReference>
<dbReference type="PDBsum" id="3JCT"/>
<dbReference type="PDBsum" id="4WJV"/>
<dbReference type="PDBsum" id="6ELZ"/>
<dbReference type="PDBsum" id="6EM1"/>
<dbReference type="PDBsum" id="6EM5"/>
<dbReference type="PDBsum" id="6FT6"/>
<dbReference type="PDBsum" id="6M62"/>
<dbReference type="PDBsum" id="6N8J"/>
<dbReference type="PDBsum" id="6YLG"/>
<dbReference type="PDBsum" id="6YLH"/>
<dbReference type="PDBsum" id="6YLX"/>
<dbReference type="PDBsum" id="6YLY"/>
<dbReference type="PDBsum" id="7BT6"/>
<dbReference type="PDBsum" id="7BTB"/>
<dbReference type="PDBsum" id="7NAC"/>
<dbReference type="PDBsum" id="7OF1"/>
<dbReference type="PDBsum" id="7OH3"/>
<dbReference type="PDBsum" id="7OHP"/>
<dbReference type="PDBsum" id="7OHQ"/>
<dbReference type="PDBsum" id="7OHR"/>
<dbReference type="PDBsum" id="7OHS"/>
<dbReference type="PDBsum" id="7OHT"/>
<dbReference type="PDBsum" id="7OHU"/>
<dbReference type="PDBsum" id="7OHV"/>
<dbReference type="PDBsum" id="7OHW"/>
<dbReference type="PDBsum" id="7OHY"/>
<dbReference type="PDBsum" id="7R6K"/>
<dbReference type="PDBsum" id="7R7A"/>
<dbReference type="PDBsum" id="7R7C"/>
<dbReference type="PDBsum" id="7U0H"/>
<dbReference type="PDBsum" id="7UG6"/>
<dbReference type="PDBsum" id="7UOO"/>
<dbReference type="PDBsum" id="7UQB"/>
<dbReference type="PDBsum" id="7UQZ"/>
<dbReference type="PDBsum" id="7V08"/>
<dbReference type="PDBsum" id="7Z34"/>
<dbReference type="PDBsum" id="8HFR"/>
<dbReference type="PDBsum" id="8V83"/>
<dbReference type="PDBsum" id="8V84"/>
<dbReference type="PDBsum" id="8V87"/>
<dbReference type="EMDB" id="EMD-0369"/>
<dbReference type="EMDB" id="EMD-10838"/>
<dbReference type="EMDB" id="EMD-10839"/>
<dbReference type="EMDB" id="EMD-12866"/>
<dbReference type="EMDB" id="EMD-12892"/>
<dbReference type="EMDB" id="EMD-12904"/>
<dbReference type="EMDB" id="EMD-12905"/>
<dbReference type="EMDB" id="EMD-12906"/>
<dbReference type="EMDB" id="EMD-12907"/>
<dbReference type="EMDB" id="EMD-12908"/>
<dbReference type="EMDB" id="EMD-12909"/>
<dbReference type="EMDB" id="EMD-12910"/>
<dbReference type="EMDB" id="EMD-12911"/>
<dbReference type="EMDB" id="EMD-12913"/>
<dbReference type="EMDB" id="EMD-14471"/>
<dbReference type="EMDB" id="EMD-26485"/>
<dbReference type="EMDB" id="EMD-26651"/>
<dbReference type="EMDB" id="EMD-26686"/>
<dbReference type="EMDB" id="EMD-26703"/>
<dbReference type="EMDB" id="EMD-26941"/>
<dbReference type="EMDB" id="EMD-30108"/>
<dbReference type="EMDB" id="EMD-30170"/>
<dbReference type="EMDB" id="EMD-30174"/>
<dbReference type="EMDB" id="EMD-34725"/>
<dbReference type="EMDB" id="EMD-43017"/>
<dbReference type="EMDB" id="EMD-4302"/>
<dbReference type="EMDB" id="EMD-43021"/>
<dbReference type="EMDB" id="EMD-43027"/>
<dbReference type="SMR" id="P40078"/>
<dbReference type="BioGRID" id="36870">
    <property type="interactions" value="165"/>
</dbReference>
<dbReference type="DIP" id="DIP-1892N"/>
<dbReference type="FunCoup" id="P40078">
    <property type="interactions" value="1459"/>
</dbReference>
<dbReference type="IntAct" id="P40078">
    <property type="interactions" value="113"/>
</dbReference>
<dbReference type="MINT" id="P40078"/>
<dbReference type="STRING" id="4932.YER126C"/>
<dbReference type="iPTMnet" id="P40078"/>
<dbReference type="PaxDb" id="4932-YER126C"/>
<dbReference type="PeptideAtlas" id="P40078"/>
<dbReference type="EnsemblFungi" id="YER126C_mRNA">
    <property type="protein sequence ID" value="YER126C"/>
    <property type="gene ID" value="YER126C"/>
</dbReference>
<dbReference type="GeneID" id="856863"/>
<dbReference type="KEGG" id="sce:YER126C"/>
<dbReference type="AGR" id="SGD:S000000928"/>
<dbReference type="SGD" id="S000000928">
    <property type="gene designation" value="NSA2"/>
</dbReference>
<dbReference type="VEuPathDB" id="FungiDB:YER126C"/>
<dbReference type="eggNOG" id="KOG3163">
    <property type="taxonomic scope" value="Eukaryota"/>
</dbReference>
<dbReference type="GeneTree" id="ENSGT00390000018706"/>
<dbReference type="HOGENOM" id="CLU_1070048_0_0_1"/>
<dbReference type="InParanoid" id="P40078"/>
<dbReference type="OMA" id="TNTPEND"/>
<dbReference type="OrthoDB" id="1847590at2759"/>
<dbReference type="BioCyc" id="YEAST:G3O-30289-MONOMER"/>
<dbReference type="BioGRID-ORCS" id="856863">
    <property type="hits" value="4 hits in 10 CRISPR screens"/>
</dbReference>
<dbReference type="EvolutionaryTrace" id="P40078"/>
<dbReference type="PRO" id="PR:P40078"/>
<dbReference type="Proteomes" id="UP000002311">
    <property type="component" value="Chromosome V"/>
</dbReference>
<dbReference type="RNAct" id="P40078">
    <property type="molecule type" value="protein"/>
</dbReference>
<dbReference type="GO" id="GO:0005730">
    <property type="term" value="C:nucleolus"/>
    <property type="evidence" value="ECO:0007669"/>
    <property type="project" value="UniProtKB-SubCell"/>
</dbReference>
<dbReference type="GO" id="GO:0005634">
    <property type="term" value="C:nucleus"/>
    <property type="evidence" value="ECO:0000314"/>
    <property type="project" value="SGD"/>
</dbReference>
<dbReference type="GO" id="GO:0030687">
    <property type="term" value="C:preribosome, large subunit precursor"/>
    <property type="evidence" value="ECO:0000314"/>
    <property type="project" value="SGD"/>
</dbReference>
<dbReference type="GO" id="GO:0000460">
    <property type="term" value="P:maturation of 5.8S rRNA"/>
    <property type="evidence" value="ECO:0000318"/>
    <property type="project" value="GO_Central"/>
</dbReference>
<dbReference type="GO" id="GO:0000466">
    <property type="term" value="P:maturation of 5.8S rRNA from tricistronic rRNA transcript (SSU-rRNA, 5.8S rRNA, LSU-rRNA)"/>
    <property type="evidence" value="ECO:0000315"/>
    <property type="project" value="SGD"/>
</dbReference>
<dbReference type="GO" id="GO:0000470">
    <property type="term" value="P:maturation of LSU-rRNA"/>
    <property type="evidence" value="ECO:0000318"/>
    <property type="project" value="GO_Central"/>
</dbReference>
<dbReference type="GO" id="GO:0000463">
    <property type="term" value="P:maturation of LSU-rRNA from tricistronic rRNA transcript (SSU-rRNA, 5.8S rRNA, LSU-rRNA)"/>
    <property type="evidence" value="ECO:0000315"/>
    <property type="project" value="SGD"/>
</dbReference>
<dbReference type="GO" id="GO:0042273">
    <property type="term" value="P:ribosomal large subunit biogenesis"/>
    <property type="evidence" value="ECO:0000315"/>
    <property type="project" value="SGD"/>
</dbReference>
<dbReference type="CDD" id="cd11381">
    <property type="entry name" value="NSA2"/>
    <property type="match status" value="1"/>
</dbReference>
<dbReference type="FunFam" id="2.40.10.310:FF:000001">
    <property type="entry name" value="NSA2, ribosome biogenesis homolog"/>
    <property type="match status" value="1"/>
</dbReference>
<dbReference type="Gene3D" id="2.40.10.310">
    <property type="match status" value="1"/>
</dbReference>
<dbReference type="InterPro" id="IPR039411">
    <property type="entry name" value="NSA2_fam"/>
</dbReference>
<dbReference type="InterPro" id="IPR022309">
    <property type="entry name" value="Ribosomal_Se8/biogenesis_NSA2"/>
</dbReference>
<dbReference type="PANTHER" id="PTHR12642">
    <property type="entry name" value="RIBOSOME BIOGENESIS PROTEIN NSA2 HOMOLOG"/>
    <property type="match status" value="1"/>
</dbReference>
<dbReference type="Pfam" id="PF01201">
    <property type="entry name" value="Ribosomal_S8e"/>
    <property type="match status" value="1"/>
</dbReference>
<comment type="function">
    <text evidence="6 7">Involved in the biogenesis of the 60S ribosomal subunit. May play a part in the quality control of pre-60S particles. Under normal, rapid growth conditions, high levels of NSA2 would allow the progression of pre-60S particles through the ITS2 processing.</text>
</comment>
<comment type="subunit">
    <text evidence="3 5 7 8 9">Component of the pre-66S ribosomal particle. Interacts with NOP7 and RRP1. Interacts with RSA4 (via WD repeats) (PubMed:25404745).</text>
</comment>
<comment type="interaction">
    <interactant intactId="EBI-22681">
        <id>P40078</id>
    </interactant>
    <interactant intactId="EBI-23731">
        <id>P53188</id>
        <label>CGR1</label>
    </interactant>
    <organismsDiffer>false</organismsDiffer>
    <experiments>5</experiments>
</comment>
<comment type="interaction">
    <interactant intactId="EBI-22681">
        <id>P40078</id>
    </interactant>
    <interactant intactId="EBI-6170">
        <id>P32892</id>
        <label>DRS1</label>
    </interactant>
    <organismsDiffer>false</organismsDiffer>
    <experiments>3</experiments>
</comment>
<comment type="interaction">
    <interactant intactId="EBI-22681">
        <id>P40078</id>
    </interactant>
    <interactant intactId="EBI-6289">
        <id>P36049</id>
        <label>EBP2</label>
    </interactant>
    <organismsDiffer>false</organismsDiffer>
    <experiments>4</experiments>
</comment>
<comment type="interaction">
    <interactant intactId="EBI-22681">
        <id>P40078</id>
    </interactant>
    <interactant intactId="EBI-8170">
        <id>Q03532</id>
        <label>HAS1</label>
    </interactant>
    <organismsDiffer>false</organismsDiffer>
    <experiments>4</experiments>
</comment>
<comment type="interaction">
    <interactant intactId="EBI-22681">
        <id>P40078</id>
    </interactant>
    <interactant intactId="EBI-29259">
        <id>P39744</id>
        <label>NOC2</label>
    </interactant>
    <organismsDiffer>false</organismsDiffer>
    <experiments>4</experiments>
</comment>
<comment type="interaction">
    <interactant intactId="EBI-22681">
        <id>P40078</id>
    </interactant>
    <interactant intactId="EBI-12105">
        <id>Q02892</id>
        <label>NOG1</label>
    </interactant>
    <organismsDiffer>false</organismsDiffer>
    <experiments>5</experiments>
</comment>
<comment type="interaction">
    <interactant intactId="EBI-22681">
        <id>P40078</id>
    </interactant>
    <interactant intactId="EBI-28853">
        <id>P53927</id>
        <label>NOP15</label>
    </interactant>
    <organismsDiffer>false</organismsDiffer>
    <experiments>4</experiments>
</comment>
<comment type="interaction">
    <interactant intactId="EBI-22681">
        <id>P40078</id>
    </interactant>
    <interactant intactId="EBI-12122">
        <id>P37838</id>
        <label>NOP4</label>
    </interactant>
    <organismsDiffer>false</organismsDiffer>
    <experiments>3</experiments>
</comment>
<comment type="interaction">
    <interactant intactId="EBI-22681">
        <id>P40078</id>
    </interactant>
    <interactant intactId="EBI-505">
        <id>P53131</id>
        <label>PRP43</label>
    </interactant>
    <organismsDiffer>false</organismsDiffer>
    <experiments>3</experiments>
</comment>
<comment type="interaction">
    <interactant intactId="EBI-22681">
        <id>P40078</id>
    </interactant>
    <interactant intactId="EBI-21980">
        <id>P25382</id>
        <label>RSA4</label>
    </interactant>
    <organismsDiffer>false</organismsDiffer>
    <experiments>5</experiments>
</comment>
<comment type="subcellular location">
    <subcellularLocation>
        <location evidence="10">Nucleus</location>
        <location evidence="10">Nucleolus</location>
    </subcellularLocation>
</comment>
<comment type="miscellaneous">
    <text evidence="4">Present with 8660 molecules/cell in log phase SD medium.</text>
</comment>
<comment type="similarity">
    <text evidence="10">Belongs to the eukaryotic ribosomal protein eS8 family. Ribosome biogenesis protein NSA2 subfamily.</text>
</comment>
<evidence type="ECO:0000255" key="1">
    <source>
        <dbReference type="PROSITE-ProRule" id="PRU00768"/>
    </source>
</evidence>
<evidence type="ECO:0000256" key="2">
    <source>
        <dbReference type="SAM" id="MobiDB-lite"/>
    </source>
</evidence>
<evidence type="ECO:0000269" key="3">
    <source>
    </source>
</evidence>
<evidence type="ECO:0000269" key="4">
    <source>
    </source>
</evidence>
<evidence type="ECO:0000269" key="5">
    <source>
    </source>
</evidence>
<evidence type="ECO:0000269" key="6">
    <source>
    </source>
</evidence>
<evidence type="ECO:0000269" key="7">
    <source>
    </source>
</evidence>
<evidence type="ECO:0000269" key="8">
    <source>
    </source>
</evidence>
<evidence type="ECO:0000269" key="9">
    <source>
    </source>
</evidence>
<evidence type="ECO:0000305" key="10"/>
<evidence type="ECO:0007829" key="11">
    <source>
        <dbReference type="PDB" id="4WJV"/>
    </source>
</evidence>
<evidence type="ECO:0007829" key="12">
    <source>
        <dbReference type="PDB" id="7R6K"/>
    </source>
</evidence>
<organism>
    <name type="scientific">Saccharomyces cerevisiae (strain ATCC 204508 / S288c)</name>
    <name type="common">Baker's yeast</name>
    <dbReference type="NCBI Taxonomy" id="559292"/>
    <lineage>
        <taxon>Eukaryota</taxon>
        <taxon>Fungi</taxon>
        <taxon>Dikarya</taxon>
        <taxon>Ascomycota</taxon>
        <taxon>Saccharomycotina</taxon>
        <taxon>Saccharomycetes</taxon>
        <taxon>Saccharomycetales</taxon>
        <taxon>Saccharomycetaceae</taxon>
        <taxon>Saccharomyces</taxon>
    </lineage>
</organism>
<keyword id="KW-0002">3D-structure</keyword>
<keyword id="KW-0539">Nucleus</keyword>
<keyword id="KW-1185">Reference proteome</keyword>
<keyword id="KW-0690">Ribosome biogenesis</keyword>
<keyword id="KW-0698">rRNA processing</keyword>
<gene>
    <name type="primary">NSA2</name>
    <name type="ordered locus">YER126C</name>
    <name type="ORF">SYGP-ORF47</name>
</gene>
<feature type="chain" id="PRO_0000202648" description="Ribosome biogenesis protein NSA2">
    <location>
        <begin position="1"/>
        <end position="261"/>
    </location>
</feature>
<feature type="region of interest" description="Disordered" evidence="2">
    <location>
        <begin position="1"/>
        <end position="43"/>
    </location>
</feature>
<feature type="region of interest" description="Disordered" evidence="2">
    <location>
        <begin position="61"/>
        <end position="87"/>
    </location>
</feature>
<feature type="region of interest" description="Interaction with RSA4" evidence="9">
    <location>
        <begin position="85"/>
        <end position="98"/>
    </location>
</feature>
<feature type="short sequence motif" description="Nuclear localization signal 1" evidence="1">
    <location>
        <begin position="15"/>
        <end position="22"/>
    </location>
</feature>
<feature type="short sequence motif" description="Nuclear localization signal 2" evidence="1">
    <location>
        <begin position="51"/>
        <end position="58"/>
    </location>
</feature>
<feature type="compositionally biased region" description="Basic and acidic residues" evidence="2">
    <location>
        <begin position="1"/>
        <end position="40"/>
    </location>
</feature>
<feature type="mutagenesis site" description="Abolishes interaction with RSA4. Blocks production of mature 60S subunits, and causes the accumulation of pre-60S particles." evidence="9">
    <original>Y</original>
    <variation>A</variation>
    <location>
        <position position="90"/>
    </location>
</feature>
<feature type="turn" evidence="11">
    <location>
        <begin position="89"/>
        <end position="93"/>
    </location>
</feature>
<feature type="helix" evidence="12">
    <location>
        <begin position="166"/>
        <end position="168"/>
    </location>
</feature>
<name>NSA2_YEAST</name>